<accession>F5HCJ2</accession>
<sequence length="114" mass="12678">MWSMCWVLRAHLGLLFWVAVIELCAASGPATIMASDCCENSLSSARLPPDKLICGWYWTSTVYCRQKAVIFVTHSGRKVCGSPAKRRTRLLMEKHTEIPLAKRVALRAGKGLCP</sequence>
<keyword id="KW-1185">Reference proteome</keyword>
<keyword id="KW-0732">Signal</keyword>
<organism>
    <name type="scientific">Human herpesvirus 8 type P (isolate GK18)</name>
    <name type="common">HHV-8</name>
    <name type="synonym">Kaposi's sarcoma-associated herpesvirus</name>
    <dbReference type="NCBI Taxonomy" id="868565"/>
    <lineage>
        <taxon>Viruses</taxon>
        <taxon>Duplodnaviria</taxon>
        <taxon>Heunggongvirae</taxon>
        <taxon>Peploviricota</taxon>
        <taxon>Herviviricetes</taxon>
        <taxon>Herpesvirales</taxon>
        <taxon>Orthoherpesviridae</taxon>
        <taxon>Gammaherpesvirinae</taxon>
        <taxon>Rhadinovirus</taxon>
        <taxon>Rhadinovirus humangamma8</taxon>
        <taxon>Human herpesvirus 8</taxon>
    </lineage>
</organism>
<evidence type="ECO:0000255" key="1"/>
<evidence type="ECO:0000269" key="2">
    <source>
    </source>
</evidence>
<protein>
    <recommendedName>
        <fullName>Protein vCCL3</fullName>
    </recommendedName>
</protein>
<organismHost>
    <name type="scientific">Homo sapiens</name>
    <name type="common">Human</name>
    <dbReference type="NCBI Taxonomy" id="9606"/>
</organismHost>
<feature type="signal peptide" evidence="1">
    <location>
        <begin position="1"/>
        <end position="26"/>
    </location>
</feature>
<feature type="chain" id="PRO_0000423906" description="Protein vCCL3">
    <location>
        <begin position="27"/>
        <end position="114"/>
    </location>
</feature>
<dbReference type="EMBL" id="AF148805">
    <property type="protein sequence ID" value="ABD28860.1"/>
    <property type="molecule type" value="Genomic_DNA"/>
</dbReference>
<dbReference type="RefSeq" id="YP_001129363.1">
    <property type="nucleotide sequence ID" value="NC_009333.1"/>
</dbReference>
<dbReference type="SMR" id="F5HCJ2"/>
<dbReference type="BioGRID" id="1776939">
    <property type="interactions" value="7"/>
</dbReference>
<dbReference type="DNASU" id="4961436"/>
<dbReference type="GeneID" id="4961436"/>
<dbReference type="KEGG" id="vg:4961436"/>
<dbReference type="Proteomes" id="UP000000942">
    <property type="component" value="Segment"/>
</dbReference>
<dbReference type="GO" id="GO:0005576">
    <property type="term" value="C:extracellular region"/>
    <property type="evidence" value="ECO:0007669"/>
    <property type="project" value="InterPro"/>
</dbReference>
<dbReference type="GO" id="GO:0008009">
    <property type="term" value="F:chemokine activity"/>
    <property type="evidence" value="ECO:0007669"/>
    <property type="project" value="InterPro"/>
</dbReference>
<dbReference type="GO" id="GO:0006955">
    <property type="term" value="P:immune response"/>
    <property type="evidence" value="ECO:0007669"/>
    <property type="project" value="InterPro"/>
</dbReference>
<dbReference type="Gene3D" id="2.40.50.40">
    <property type="match status" value="1"/>
</dbReference>
<dbReference type="InterPro" id="IPR001811">
    <property type="entry name" value="Chemokine_IL8-like_dom"/>
</dbReference>
<dbReference type="InterPro" id="IPR036048">
    <property type="entry name" value="Interleukin_8-like_sf"/>
</dbReference>
<dbReference type="Pfam" id="PF00048">
    <property type="entry name" value="IL8"/>
    <property type="match status" value="1"/>
</dbReference>
<dbReference type="SMART" id="SM00199">
    <property type="entry name" value="SCY"/>
    <property type="match status" value="1"/>
</dbReference>
<dbReference type="SUPFAM" id="SSF54117">
    <property type="entry name" value="Interleukin 8-like chemokines"/>
    <property type="match status" value="1"/>
</dbReference>
<gene>
    <name type="primary">K4.1</name>
</gene>
<comment type="function">
    <text evidence="2">Acts as a highly selective agonist for human lymphoactin receptor XCR1.</text>
</comment>
<reference key="1">
    <citation type="journal article" date="1999" name="J. Virol.">
        <title>Identification of a spliced gene from Kaposi's sarcoma-associated herpesvirus encoding a protein with similarities to latent membrane proteins 1 and 2A of Epstein-Barr virus.</title>
        <authorList>
            <person name="Glenn M."/>
            <person name="Rainbow L."/>
            <person name="Aurade F."/>
            <person name="Davison A."/>
            <person name="Schulz T.F."/>
        </authorList>
    </citation>
    <scope>NUCLEOTIDE SEQUENCE [LARGE SCALE GENOMIC DNA]</scope>
</reference>
<reference key="2">
    <citation type="journal article" date="2006" name="J. Gen. Virol.">
        <title>Kaposi's sarcoma-associated herpesvirus immune modulation: an overview.</title>
        <authorList>
            <person name="Rezaee S.A.R."/>
            <person name="Cunningham C."/>
            <person name="Davison A.J."/>
            <person name="Blackbourn D.J."/>
        </authorList>
    </citation>
    <scope>NUCLEOTIDE SEQUENCE [LARGE SCALE GENOMIC DNA]</scope>
</reference>
<reference key="3">
    <citation type="journal article" date="2007" name="J. Biol. Chem.">
        <title>Kaposi sarcoma-associated herpes virus targets the lymphotactin receptor with both a broad spectrum antagonist vCCL2 and a highly selective and potent agonist vCCL3.</title>
        <authorList>
            <person name="Luettichau H.R."/>
            <person name="Johnsen A.H."/>
            <person name="Jurlander J."/>
            <person name="Rosenkilde M.M."/>
            <person name="Schwartz T.W."/>
        </authorList>
    </citation>
    <scope>FUNCTION</scope>
</reference>
<proteinExistence type="inferred from homology"/>
<name>VCCL3_HHV8P</name>